<keyword id="KW-0004">4Fe-4S</keyword>
<keyword id="KW-0963">Cytoplasm</keyword>
<keyword id="KW-1015">Disulfide bond</keyword>
<keyword id="KW-0408">Iron</keyword>
<keyword id="KW-0411">Iron-sulfur</keyword>
<keyword id="KW-0479">Metal-binding</keyword>
<keyword id="KW-0489">Methyltransferase</keyword>
<keyword id="KW-1185">Reference proteome</keyword>
<keyword id="KW-0698">rRNA processing</keyword>
<keyword id="KW-0949">S-adenosyl-L-methionine</keyword>
<keyword id="KW-0808">Transferase</keyword>
<keyword id="KW-0819">tRNA processing</keyword>
<accession>A3CLL3</accession>
<sequence>MKPSIYSLTRQEMIEWAEAQGEKKFRAAQIWEWLYRKRVQSFEEMTNLSKDLIAKLNDQFVVNPLKQRIVQESADGTVKYLFELPDGMLIETVLMRQHYGLSVCVTTQVGCNIGCTFCASGLIKKQRDLNNGEIVAQIMLVQKYFDERGQDERVSHIVVMGIGEPFDNYDNVLKFVRTVNDDKGLAIGARHITVSTSGLAHKIRDFANEGVQVNLAVSLHAPNNDLRTSIMRINRSFPIEKLFAAIEYYIETTNRRVTFEYIMLNEVNDGVEQAKELAELLKNIKKLSYVNLIPYNPVSEHDQYSRSPKERVMAFYDTLKKNGVNCVVRQEHGTDIDAACGQLRSNTMKRDREKALVENVQP</sequence>
<dbReference type="EC" id="2.1.1.192" evidence="1"/>
<dbReference type="EMBL" id="CP000387">
    <property type="protein sequence ID" value="ABN44068.1"/>
    <property type="molecule type" value="Genomic_DNA"/>
</dbReference>
<dbReference type="RefSeq" id="WP_002911938.1">
    <property type="nucleotide sequence ID" value="NC_009009.1"/>
</dbReference>
<dbReference type="RefSeq" id="YP_001034618.1">
    <property type="nucleotide sequence ID" value="NC_009009.1"/>
</dbReference>
<dbReference type="SMR" id="A3CLL3"/>
<dbReference type="STRING" id="388919.SSA_0628"/>
<dbReference type="KEGG" id="ssa:SSA_0628"/>
<dbReference type="PATRIC" id="fig|388919.9.peg.605"/>
<dbReference type="eggNOG" id="COG0820">
    <property type="taxonomic scope" value="Bacteria"/>
</dbReference>
<dbReference type="HOGENOM" id="CLU_029101_0_1_9"/>
<dbReference type="OrthoDB" id="9793973at2"/>
<dbReference type="Proteomes" id="UP000002148">
    <property type="component" value="Chromosome"/>
</dbReference>
<dbReference type="GO" id="GO:0005737">
    <property type="term" value="C:cytoplasm"/>
    <property type="evidence" value="ECO:0007669"/>
    <property type="project" value="UniProtKB-SubCell"/>
</dbReference>
<dbReference type="GO" id="GO:0051539">
    <property type="term" value="F:4 iron, 4 sulfur cluster binding"/>
    <property type="evidence" value="ECO:0007669"/>
    <property type="project" value="UniProtKB-UniRule"/>
</dbReference>
<dbReference type="GO" id="GO:0046872">
    <property type="term" value="F:metal ion binding"/>
    <property type="evidence" value="ECO:0007669"/>
    <property type="project" value="UniProtKB-KW"/>
</dbReference>
<dbReference type="GO" id="GO:0070040">
    <property type="term" value="F:rRNA (adenine(2503)-C2-)-methyltransferase activity"/>
    <property type="evidence" value="ECO:0007669"/>
    <property type="project" value="UniProtKB-UniRule"/>
</dbReference>
<dbReference type="GO" id="GO:0019843">
    <property type="term" value="F:rRNA binding"/>
    <property type="evidence" value="ECO:0007669"/>
    <property type="project" value="UniProtKB-UniRule"/>
</dbReference>
<dbReference type="GO" id="GO:0002935">
    <property type="term" value="F:tRNA (adenine(37)-C2)-methyltransferase activity"/>
    <property type="evidence" value="ECO:0007669"/>
    <property type="project" value="UniProtKB-UniRule"/>
</dbReference>
<dbReference type="GO" id="GO:0000049">
    <property type="term" value="F:tRNA binding"/>
    <property type="evidence" value="ECO:0007669"/>
    <property type="project" value="UniProtKB-UniRule"/>
</dbReference>
<dbReference type="GO" id="GO:0070475">
    <property type="term" value="P:rRNA base methylation"/>
    <property type="evidence" value="ECO:0007669"/>
    <property type="project" value="UniProtKB-UniRule"/>
</dbReference>
<dbReference type="GO" id="GO:0030488">
    <property type="term" value="P:tRNA methylation"/>
    <property type="evidence" value="ECO:0007669"/>
    <property type="project" value="UniProtKB-UniRule"/>
</dbReference>
<dbReference type="CDD" id="cd01335">
    <property type="entry name" value="Radical_SAM"/>
    <property type="match status" value="1"/>
</dbReference>
<dbReference type="FunFam" id="3.20.20.70:FF:000014">
    <property type="entry name" value="Probable dual-specificity RNA methyltransferase RlmN"/>
    <property type="match status" value="1"/>
</dbReference>
<dbReference type="Gene3D" id="1.10.150.530">
    <property type="match status" value="1"/>
</dbReference>
<dbReference type="Gene3D" id="3.20.20.70">
    <property type="entry name" value="Aldolase class I"/>
    <property type="match status" value="1"/>
</dbReference>
<dbReference type="HAMAP" id="MF_01849">
    <property type="entry name" value="RNA_methyltr_RlmN"/>
    <property type="match status" value="1"/>
</dbReference>
<dbReference type="InterPro" id="IPR013785">
    <property type="entry name" value="Aldolase_TIM"/>
</dbReference>
<dbReference type="InterPro" id="IPR040072">
    <property type="entry name" value="Methyltransferase_A"/>
</dbReference>
<dbReference type="InterPro" id="IPR048641">
    <property type="entry name" value="RlmN_N"/>
</dbReference>
<dbReference type="InterPro" id="IPR027492">
    <property type="entry name" value="RNA_MTrfase_RlmN"/>
</dbReference>
<dbReference type="InterPro" id="IPR004383">
    <property type="entry name" value="rRNA_lsu_MTrfase_RlmN/Cfr"/>
</dbReference>
<dbReference type="InterPro" id="IPR007197">
    <property type="entry name" value="rSAM"/>
</dbReference>
<dbReference type="NCBIfam" id="TIGR00048">
    <property type="entry name" value="rRNA_mod_RlmN"/>
    <property type="match status" value="1"/>
</dbReference>
<dbReference type="PANTHER" id="PTHR30544">
    <property type="entry name" value="23S RRNA METHYLTRANSFERASE"/>
    <property type="match status" value="1"/>
</dbReference>
<dbReference type="PANTHER" id="PTHR30544:SF5">
    <property type="entry name" value="RADICAL SAM CORE DOMAIN-CONTAINING PROTEIN"/>
    <property type="match status" value="1"/>
</dbReference>
<dbReference type="Pfam" id="PF04055">
    <property type="entry name" value="Radical_SAM"/>
    <property type="match status" value="1"/>
</dbReference>
<dbReference type="Pfam" id="PF21016">
    <property type="entry name" value="RlmN_N"/>
    <property type="match status" value="1"/>
</dbReference>
<dbReference type="PIRSF" id="PIRSF006004">
    <property type="entry name" value="CHP00048"/>
    <property type="match status" value="1"/>
</dbReference>
<dbReference type="SFLD" id="SFLDF00275">
    <property type="entry name" value="adenosine_C2_methyltransferase"/>
    <property type="match status" value="1"/>
</dbReference>
<dbReference type="SFLD" id="SFLDS00029">
    <property type="entry name" value="Radical_SAM"/>
    <property type="match status" value="1"/>
</dbReference>
<dbReference type="SUPFAM" id="SSF102114">
    <property type="entry name" value="Radical SAM enzymes"/>
    <property type="match status" value="1"/>
</dbReference>
<dbReference type="PROSITE" id="PS51918">
    <property type="entry name" value="RADICAL_SAM"/>
    <property type="match status" value="1"/>
</dbReference>
<comment type="function">
    <text evidence="1">Specifically methylates position 2 of adenine 2503 in 23S rRNA and position 2 of adenine 37 in tRNAs.</text>
</comment>
<comment type="catalytic activity">
    <reaction evidence="1">
        <text>adenosine(2503) in 23S rRNA + 2 reduced [2Fe-2S]-[ferredoxin] + 2 S-adenosyl-L-methionine = 2-methyladenosine(2503) in 23S rRNA + 5'-deoxyadenosine + L-methionine + 2 oxidized [2Fe-2S]-[ferredoxin] + S-adenosyl-L-homocysteine</text>
        <dbReference type="Rhea" id="RHEA:42916"/>
        <dbReference type="Rhea" id="RHEA-COMP:10000"/>
        <dbReference type="Rhea" id="RHEA-COMP:10001"/>
        <dbReference type="Rhea" id="RHEA-COMP:10152"/>
        <dbReference type="Rhea" id="RHEA-COMP:10282"/>
        <dbReference type="ChEBI" id="CHEBI:17319"/>
        <dbReference type="ChEBI" id="CHEBI:33737"/>
        <dbReference type="ChEBI" id="CHEBI:33738"/>
        <dbReference type="ChEBI" id="CHEBI:57844"/>
        <dbReference type="ChEBI" id="CHEBI:57856"/>
        <dbReference type="ChEBI" id="CHEBI:59789"/>
        <dbReference type="ChEBI" id="CHEBI:74411"/>
        <dbReference type="ChEBI" id="CHEBI:74497"/>
        <dbReference type="EC" id="2.1.1.192"/>
    </reaction>
</comment>
<comment type="catalytic activity">
    <reaction evidence="1">
        <text>adenosine(37) in tRNA + 2 reduced [2Fe-2S]-[ferredoxin] + 2 S-adenosyl-L-methionine = 2-methyladenosine(37) in tRNA + 5'-deoxyadenosine + L-methionine + 2 oxidized [2Fe-2S]-[ferredoxin] + S-adenosyl-L-homocysteine</text>
        <dbReference type="Rhea" id="RHEA:43332"/>
        <dbReference type="Rhea" id="RHEA-COMP:10000"/>
        <dbReference type="Rhea" id="RHEA-COMP:10001"/>
        <dbReference type="Rhea" id="RHEA-COMP:10162"/>
        <dbReference type="Rhea" id="RHEA-COMP:10485"/>
        <dbReference type="ChEBI" id="CHEBI:17319"/>
        <dbReference type="ChEBI" id="CHEBI:33737"/>
        <dbReference type="ChEBI" id="CHEBI:33738"/>
        <dbReference type="ChEBI" id="CHEBI:57844"/>
        <dbReference type="ChEBI" id="CHEBI:57856"/>
        <dbReference type="ChEBI" id="CHEBI:59789"/>
        <dbReference type="ChEBI" id="CHEBI:74411"/>
        <dbReference type="ChEBI" id="CHEBI:74497"/>
        <dbReference type="EC" id="2.1.1.192"/>
    </reaction>
</comment>
<comment type="cofactor">
    <cofactor evidence="1">
        <name>[4Fe-4S] cluster</name>
        <dbReference type="ChEBI" id="CHEBI:49883"/>
    </cofactor>
    <text evidence="1">Binds 1 [4Fe-4S] cluster. The cluster is coordinated with 3 cysteines and an exchangeable S-adenosyl-L-methionine.</text>
</comment>
<comment type="subcellular location">
    <subcellularLocation>
        <location evidence="1">Cytoplasm</location>
    </subcellularLocation>
</comment>
<comment type="miscellaneous">
    <text evidence="1">Reaction proceeds by a ping-pong mechanism involving intermediate methylation of a conserved cysteine residue.</text>
</comment>
<comment type="similarity">
    <text evidence="1">Belongs to the radical SAM superfamily. RlmN family.</text>
</comment>
<evidence type="ECO:0000255" key="1">
    <source>
        <dbReference type="HAMAP-Rule" id="MF_01849"/>
    </source>
</evidence>
<evidence type="ECO:0000255" key="2">
    <source>
        <dbReference type="PROSITE-ProRule" id="PRU01266"/>
    </source>
</evidence>
<protein>
    <recommendedName>
        <fullName evidence="1">Probable dual-specificity RNA methyltransferase RlmN</fullName>
        <ecNumber evidence="1">2.1.1.192</ecNumber>
    </recommendedName>
    <alternativeName>
        <fullName evidence="1">23S rRNA (adenine(2503)-C(2))-methyltransferase</fullName>
    </alternativeName>
    <alternativeName>
        <fullName evidence="1">23S rRNA m2A2503 methyltransferase</fullName>
    </alternativeName>
    <alternativeName>
        <fullName evidence="1">Ribosomal RNA large subunit methyltransferase N</fullName>
    </alternativeName>
    <alternativeName>
        <fullName evidence="1">tRNA (adenine(37)-C(2))-methyltransferase</fullName>
    </alternativeName>
    <alternativeName>
        <fullName evidence="1">tRNA m2A37 methyltransferase</fullName>
    </alternativeName>
</protein>
<name>RLMN_STRSV</name>
<reference key="1">
    <citation type="journal article" date="2007" name="J. Bacteriol.">
        <title>Genome of the opportunistic pathogen Streptococcus sanguinis.</title>
        <authorList>
            <person name="Xu P."/>
            <person name="Alves J.M."/>
            <person name="Kitten T."/>
            <person name="Brown A."/>
            <person name="Chen Z."/>
            <person name="Ozaki L.S."/>
            <person name="Manque P."/>
            <person name="Ge X."/>
            <person name="Serrano M.G."/>
            <person name="Puiu D."/>
            <person name="Hendricks S."/>
            <person name="Wang Y."/>
            <person name="Chaplin M.D."/>
            <person name="Akan D."/>
            <person name="Paik S."/>
            <person name="Peterson D.L."/>
            <person name="Macrina F.L."/>
            <person name="Buck G.A."/>
        </authorList>
    </citation>
    <scope>NUCLEOTIDE SEQUENCE [LARGE SCALE GENOMIC DNA]</scope>
    <source>
        <strain>SK36</strain>
    </source>
</reference>
<feature type="chain" id="PRO_0000350468" description="Probable dual-specificity RNA methyltransferase RlmN">
    <location>
        <begin position="1"/>
        <end position="362"/>
    </location>
</feature>
<feature type="domain" description="Radical SAM core" evidence="2">
    <location>
        <begin position="97"/>
        <end position="329"/>
    </location>
</feature>
<feature type="active site" description="Proton acceptor" evidence="1">
    <location>
        <position position="91"/>
    </location>
</feature>
<feature type="active site" description="S-methylcysteine intermediate" evidence="1">
    <location>
        <position position="340"/>
    </location>
</feature>
<feature type="binding site" evidence="1">
    <location>
        <position position="111"/>
    </location>
    <ligand>
        <name>[4Fe-4S] cluster</name>
        <dbReference type="ChEBI" id="CHEBI:49883"/>
        <note>4Fe-4S-S-AdoMet</note>
    </ligand>
</feature>
<feature type="binding site" evidence="1">
    <location>
        <position position="115"/>
    </location>
    <ligand>
        <name>[4Fe-4S] cluster</name>
        <dbReference type="ChEBI" id="CHEBI:49883"/>
        <note>4Fe-4S-S-AdoMet</note>
    </ligand>
</feature>
<feature type="binding site" evidence="1">
    <location>
        <position position="118"/>
    </location>
    <ligand>
        <name>[4Fe-4S] cluster</name>
        <dbReference type="ChEBI" id="CHEBI:49883"/>
        <note>4Fe-4S-S-AdoMet</note>
    </ligand>
</feature>
<feature type="binding site" evidence="1">
    <location>
        <begin position="163"/>
        <end position="164"/>
    </location>
    <ligand>
        <name>S-adenosyl-L-methionine</name>
        <dbReference type="ChEBI" id="CHEBI:59789"/>
    </ligand>
</feature>
<feature type="binding site" evidence="1">
    <location>
        <position position="195"/>
    </location>
    <ligand>
        <name>S-adenosyl-L-methionine</name>
        <dbReference type="ChEBI" id="CHEBI:59789"/>
    </ligand>
</feature>
<feature type="binding site" evidence="1">
    <location>
        <begin position="218"/>
        <end position="220"/>
    </location>
    <ligand>
        <name>S-adenosyl-L-methionine</name>
        <dbReference type="ChEBI" id="CHEBI:59789"/>
    </ligand>
</feature>
<feature type="binding site" evidence="1">
    <location>
        <position position="296"/>
    </location>
    <ligand>
        <name>S-adenosyl-L-methionine</name>
        <dbReference type="ChEBI" id="CHEBI:59789"/>
    </ligand>
</feature>
<feature type="disulfide bond" description="(transient)" evidence="1">
    <location>
        <begin position="104"/>
        <end position="340"/>
    </location>
</feature>
<proteinExistence type="inferred from homology"/>
<gene>
    <name evidence="1" type="primary">rlmN</name>
    <name type="ordered locus">SSA_0628</name>
</gene>
<organism>
    <name type="scientific">Streptococcus sanguinis (strain SK36)</name>
    <dbReference type="NCBI Taxonomy" id="388919"/>
    <lineage>
        <taxon>Bacteria</taxon>
        <taxon>Bacillati</taxon>
        <taxon>Bacillota</taxon>
        <taxon>Bacilli</taxon>
        <taxon>Lactobacillales</taxon>
        <taxon>Streptococcaceae</taxon>
        <taxon>Streptococcus</taxon>
    </lineage>
</organism>